<evidence type="ECO:0000255" key="1">
    <source>
        <dbReference type="HAMAP-Rule" id="MF_00599"/>
    </source>
</evidence>
<evidence type="ECO:0000256" key="2">
    <source>
        <dbReference type="SAM" id="MobiDB-lite"/>
    </source>
</evidence>
<comment type="function">
    <text evidence="1">Essential cell division protein. May link together the upstream cell division proteins, which are predominantly cytoplasmic, with the downstream cell division proteins, which are predominantly periplasmic.</text>
</comment>
<comment type="subunit">
    <text evidence="1">Part of a complex composed of FtsB, FtsL and FtsQ.</text>
</comment>
<comment type="subcellular location">
    <subcellularLocation>
        <location evidence="1">Cell inner membrane</location>
        <topology evidence="1">Single-pass type II membrane protein</topology>
    </subcellularLocation>
    <text evidence="1">Localizes to the division septum.</text>
</comment>
<comment type="similarity">
    <text evidence="1">Belongs to the FtsB family.</text>
</comment>
<keyword id="KW-0131">Cell cycle</keyword>
<keyword id="KW-0132">Cell division</keyword>
<keyword id="KW-0997">Cell inner membrane</keyword>
<keyword id="KW-1003">Cell membrane</keyword>
<keyword id="KW-0175">Coiled coil</keyword>
<keyword id="KW-0472">Membrane</keyword>
<keyword id="KW-1185">Reference proteome</keyword>
<keyword id="KW-0812">Transmembrane</keyword>
<keyword id="KW-1133">Transmembrane helix</keyword>
<reference key="1">
    <citation type="journal article" date="2003" name="Nat. Genet.">
        <title>Comparative analysis of the genome sequences of Bordetella pertussis, Bordetella parapertussis and Bordetella bronchiseptica.</title>
        <authorList>
            <person name="Parkhill J."/>
            <person name="Sebaihia M."/>
            <person name="Preston A."/>
            <person name="Murphy L.D."/>
            <person name="Thomson N.R."/>
            <person name="Harris D.E."/>
            <person name="Holden M.T.G."/>
            <person name="Churcher C.M."/>
            <person name="Bentley S.D."/>
            <person name="Mungall K.L."/>
            <person name="Cerdeno-Tarraga A.-M."/>
            <person name="Temple L."/>
            <person name="James K.D."/>
            <person name="Harris B."/>
            <person name="Quail M.A."/>
            <person name="Achtman M."/>
            <person name="Atkin R."/>
            <person name="Baker S."/>
            <person name="Basham D."/>
            <person name="Bason N."/>
            <person name="Cherevach I."/>
            <person name="Chillingworth T."/>
            <person name="Collins M."/>
            <person name="Cronin A."/>
            <person name="Davis P."/>
            <person name="Doggett J."/>
            <person name="Feltwell T."/>
            <person name="Goble A."/>
            <person name="Hamlin N."/>
            <person name="Hauser H."/>
            <person name="Holroyd S."/>
            <person name="Jagels K."/>
            <person name="Leather S."/>
            <person name="Moule S."/>
            <person name="Norberczak H."/>
            <person name="O'Neil S."/>
            <person name="Ormond D."/>
            <person name="Price C."/>
            <person name="Rabbinowitsch E."/>
            <person name="Rutter S."/>
            <person name="Sanders M."/>
            <person name="Saunders D."/>
            <person name="Seeger K."/>
            <person name="Sharp S."/>
            <person name="Simmonds M."/>
            <person name="Skelton J."/>
            <person name="Squares R."/>
            <person name="Squares S."/>
            <person name="Stevens K."/>
            <person name="Unwin L."/>
            <person name="Whitehead S."/>
            <person name="Barrell B.G."/>
            <person name="Maskell D.J."/>
        </authorList>
    </citation>
    <scope>NUCLEOTIDE SEQUENCE [LARGE SCALE GENOMIC DNA]</scope>
    <source>
        <strain>Tohama I / ATCC BAA-589 / NCTC 13251</strain>
    </source>
</reference>
<sequence>MRLLFLVLLVLLGLIQYPLWLGKGGWFKVWDLQRQVAEQRETNDGLRARNTALEAEVRDLATGVGAVEERARSELGMMREGEVFVHILPPGTPLPSDNSTPQASALSKPRPPATPPRR</sequence>
<name>FTSB_BORPE</name>
<feature type="chain" id="PRO_1000025691" description="Cell division protein FtsB">
    <location>
        <begin position="1"/>
        <end position="118"/>
    </location>
</feature>
<feature type="topological domain" description="Cytoplasmic" evidence="1">
    <location>
        <begin position="1"/>
        <end position="3"/>
    </location>
</feature>
<feature type="transmembrane region" description="Helical" evidence="1">
    <location>
        <begin position="4"/>
        <end position="21"/>
    </location>
</feature>
<feature type="topological domain" description="Periplasmic" evidence="1">
    <location>
        <begin position="22"/>
        <end position="118"/>
    </location>
</feature>
<feature type="region of interest" description="Disordered" evidence="2">
    <location>
        <begin position="88"/>
        <end position="118"/>
    </location>
</feature>
<feature type="coiled-coil region" evidence="1">
    <location>
        <begin position="28"/>
        <end position="62"/>
    </location>
</feature>
<feature type="compositionally biased region" description="Polar residues" evidence="2">
    <location>
        <begin position="95"/>
        <end position="105"/>
    </location>
</feature>
<feature type="compositionally biased region" description="Pro residues" evidence="2">
    <location>
        <begin position="109"/>
        <end position="118"/>
    </location>
</feature>
<dbReference type="EMBL" id="BX640418">
    <property type="protein sequence ID" value="CAE42656.1"/>
    <property type="molecule type" value="Genomic_DNA"/>
</dbReference>
<dbReference type="RefSeq" id="NP_881018.1">
    <property type="nucleotide sequence ID" value="NC_002929.2"/>
</dbReference>
<dbReference type="RefSeq" id="WP_003813698.1">
    <property type="nucleotide sequence ID" value="NZ_CP039022.1"/>
</dbReference>
<dbReference type="SMR" id="Q7VW80"/>
<dbReference type="STRING" id="257313.BP2385"/>
<dbReference type="PaxDb" id="257313-BP2385"/>
<dbReference type="GeneID" id="69602284"/>
<dbReference type="KEGG" id="bpe:BP2385"/>
<dbReference type="PATRIC" id="fig|257313.5.peg.2568"/>
<dbReference type="eggNOG" id="COG2919">
    <property type="taxonomic scope" value="Bacteria"/>
</dbReference>
<dbReference type="HOGENOM" id="CLU_134863_5_2_4"/>
<dbReference type="Proteomes" id="UP000002676">
    <property type="component" value="Chromosome"/>
</dbReference>
<dbReference type="GO" id="GO:0032153">
    <property type="term" value="C:cell division site"/>
    <property type="evidence" value="ECO:0007669"/>
    <property type="project" value="UniProtKB-UniRule"/>
</dbReference>
<dbReference type="GO" id="GO:0030428">
    <property type="term" value="C:cell septum"/>
    <property type="evidence" value="ECO:0007669"/>
    <property type="project" value="TreeGrafter"/>
</dbReference>
<dbReference type="GO" id="GO:0005886">
    <property type="term" value="C:plasma membrane"/>
    <property type="evidence" value="ECO:0007669"/>
    <property type="project" value="UniProtKB-SubCell"/>
</dbReference>
<dbReference type="GO" id="GO:0043093">
    <property type="term" value="P:FtsZ-dependent cytokinesis"/>
    <property type="evidence" value="ECO:0007669"/>
    <property type="project" value="UniProtKB-UniRule"/>
</dbReference>
<dbReference type="HAMAP" id="MF_00599">
    <property type="entry name" value="FtsB"/>
    <property type="match status" value="1"/>
</dbReference>
<dbReference type="InterPro" id="IPR023081">
    <property type="entry name" value="Cell_div_FtsB"/>
</dbReference>
<dbReference type="InterPro" id="IPR007060">
    <property type="entry name" value="FtsL/DivIC"/>
</dbReference>
<dbReference type="NCBIfam" id="NF002058">
    <property type="entry name" value="PRK00888.1"/>
    <property type="match status" value="1"/>
</dbReference>
<dbReference type="PANTHER" id="PTHR37485">
    <property type="entry name" value="CELL DIVISION PROTEIN FTSB"/>
    <property type="match status" value="1"/>
</dbReference>
<dbReference type="PANTHER" id="PTHR37485:SF1">
    <property type="entry name" value="CELL DIVISION PROTEIN FTSB"/>
    <property type="match status" value="1"/>
</dbReference>
<dbReference type="Pfam" id="PF04977">
    <property type="entry name" value="DivIC"/>
    <property type="match status" value="1"/>
</dbReference>
<gene>
    <name evidence="1" type="primary">ftsB</name>
    <name type="ordered locus">BP2385</name>
</gene>
<accession>Q7VW80</accession>
<proteinExistence type="inferred from homology"/>
<protein>
    <recommendedName>
        <fullName evidence="1">Cell division protein FtsB</fullName>
    </recommendedName>
</protein>
<organism>
    <name type="scientific">Bordetella pertussis (strain Tohama I / ATCC BAA-589 / NCTC 13251)</name>
    <dbReference type="NCBI Taxonomy" id="257313"/>
    <lineage>
        <taxon>Bacteria</taxon>
        <taxon>Pseudomonadati</taxon>
        <taxon>Pseudomonadota</taxon>
        <taxon>Betaproteobacteria</taxon>
        <taxon>Burkholderiales</taxon>
        <taxon>Alcaligenaceae</taxon>
        <taxon>Bordetella</taxon>
    </lineage>
</organism>